<evidence type="ECO:0000255" key="1">
    <source>
        <dbReference type="HAMAP-Rule" id="MF_00534"/>
    </source>
</evidence>
<reference key="1">
    <citation type="journal article" date="2004" name="Environ. Microbiol.">
        <title>The genome of Desulfotalea psychrophila, a sulfate-reducing bacterium from permanently cold Arctic sediments.</title>
        <authorList>
            <person name="Rabus R."/>
            <person name="Ruepp A."/>
            <person name="Frickey T."/>
            <person name="Rattei T."/>
            <person name="Fartmann B."/>
            <person name="Stark M."/>
            <person name="Bauer M."/>
            <person name="Zibat A."/>
            <person name="Lombardot T."/>
            <person name="Becker I."/>
            <person name="Amann J."/>
            <person name="Gellner K."/>
            <person name="Teeling H."/>
            <person name="Leuschner W.D."/>
            <person name="Gloeckner F.-O."/>
            <person name="Lupas A.N."/>
            <person name="Amann R."/>
            <person name="Klenk H.-P."/>
        </authorList>
    </citation>
    <scope>NUCLEOTIDE SEQUENCE [LARGE SCALE GENOMIC DNA]</scope>
    <source>
        <strain>DSM 12343 / LSv54</strain>
    </source>
</reference>
<accession>Q6ANL4</accession>
<sequence length="449" mass="50214">MRQRITELLVAKAEEQVVTVAGWIRTRRDTGDFSFLEVNDGSTLINMQVIADKSLGNYEEEVKKLSTGCSVMVEGVLKESPAKGQSVEVHASSVTVVGWADPETYPLQKKRHSLEFLREISHLRPRTNAISAVARVRSRLSYAVHNFFQEKGFTQVHTPIITTSDCEGAGEMFQVAATGKDGHFFGAPAGLTVSGQLQAEVYATALGDVYTFGPTFRAENSNTSRHLAEFWMIEPEMAFCDLQGDMEVAEEMLKYVLADVLEHCVTDMNLFDKFISKGIIERLQSVLAHDFARVTYTEAVDQLLASGQKFDFAVKWGIDLQSEHERYLTEQVYKRPLIVTDYPAAIKPFYMRMNEDGKTVAAMDILVPGIGELVGGSQREERYDLLAERMEAAGLDLEEYGWYLDLRKYGTVPHAGFGLGFERLVQFVTGMANIREVIPFPRTPGFAPC</sequence>
<protein>
    <recommendedName>
        <fullName evidence="1">Asparagine--tRNA ligase</fullName>
        <ecNumber evidence="1">6.1.1.22</ecNumber>
    </recommendedName>
    <alternativeName>
        <fullName evidence="1">Asparaginyl-tRNA synthetase</fullName>
        <shortName evidence="1">AsnRS</shortName>
    </alternativeName>
</protein>
<organism>
    <name type="scientific">Desulfotalea psychrophila (strain LSv54 / DSM 12343)</name>
    <dbReference type="NCBI Taxonomy" id="177439"/>
    <lineage>
        <taxon>Bacteria</taxon>
        <taxon>Pseudomonadati</taxon>
        <taxon>Thermodesulfobacteriota</taxon>
        <taxon>Desulfobulbia</taxon>
        <taxon>Desulfobulbales</taxon>
        <taxon>Desulfocapsaceae</taxon>
        <taxon>Desulfotalea</taxon>
    </lineage>
</organism>
<dbReference type="EC" id="6.1.1.22" evidence="1"/>
<dbReference type="EMBL" id="CR522870">
    <property type="protein sequence ID" value="CAG36060.1"/>
    <property type="molecule type" value="Genomic_DNA"/>
</dbReference>
<dbReference type="RefSeq" id="WP_011188572.1">
    <property type="nucleotide sequence ID" value="NC_006138.1"/>
</dbReference>
<dbReference type="SMR" id="Q6ANL4"/>
<dbReference type="STRING" id="177439.DP1331"/>
<dbReference type="KEGG" id="dps:DP1331"/>
<dbReference type="eggNOG" id="COG0017">
    <property type="taxonomic scope" value="Bacteria"/>
</dbReference>
<dbReference type="HOGENOM" id="CLU_004553_2_0_7"/>
<dbReference type="OrthoDB" id="9802326at2"/>
<dbReference type="Proteomes" id="UP000000602">
    <property type="component" value="Chromosome"/>
</dbReference>
<dbReference type="GO" id="GO:0005737">
    <property type="term" value="C:cytoplasm"/>
    <property type="evidence" value="ECO:0007669"/>
    <property type="project" value="UniProtKB-SubCell"/>
</dbReference>
<dbReference type="GO" id="GO:0004816">
    <property type="term" value="F:asparagine-tRNA ligase activity"/>
    <property type="evidence" value="ECO:0007669"/>
    <property type="project" value="UniProtKB-UniRule"/>
</dbReference>
<dbReference type="GO" id="GO:0005524">
    <property type="term" value="F:ATP binding"/>
    <property type="evidence" value="ECO:0007669"/>
    <property type="project" value="UniProtKB-UniRule"/>
</dbReference>
<dbReference type="GO" id="GO:0003676">
    <property type="term" value="F:nucleic acid binding"/>
    <property type="evidence" value="ECO:0007669"/>
    <property type="project" value="InterPro"/>
</dbReference>
<dbReference type="GO" id="GO:0006421">
    <property type="term" value="P:asparaginyl-tRNA aminoacylation"/>
    <property type="evidence" value="ECO:0007669"/>
    <property type="project" value="UniProtKB-UniRule"/>
</dbReference>
<dbReference type="CDD" id="cd00776">
    <property type="entry name" value="AsxRS_core"/>
    <property type="match status" value="1"/>
</dbReference>
<dbReference type="CDD" id="cd04318">
    <property type="entry name" value="EcAsnRS_like_N"/>
    <property type="match status" value="1"/>
</dbReference>
<dbReference type="FunFam" id="3.30.930.10:FF:000016">
    <property type="entry name" value="Asparagine--tRNA ligase"/>
    <property type="match status" value="1"/>
</dbReference>
<dbReference type="Gene3D" id="3.30.930.10">
    <property type="entry name" value="Bira Bifunctional Protein, Domain 2"/>
    <property type="match status" value="1"/>
</dbReference>
<dbReference type="Gene3D" id="2.40.50.140">
    <property type="entry name" value="Nucleic acid-binding proteins"/>
    <property type="match status" value="1"/>
</dbReference>
<dbReference type="HAMAP" id="MF_00534">
    <property type="entry name" value="Asn_tRNA_synth"/>
    <property type="match status" value="1"/>
</dbReference>
<dbReference type="InterPro" id="IPR004364">
    <property type="entry name" value="Aa-tRNA-synt_II"/>
</dbReference>
<dbReference type="InterPro" id="IPR006195">
    <property type="entry name" value="aa-tRNA-synth_II"/>
</dbReference>
<dbReference type="InterPro" id="IPR045864">
    <property type="entry name" value="aa-tRNA-synth_II/BPL/LPL"/>
</dbReference>
<dbReference type="InterPro" id="IPR004522">
    <property type="entry name" value="Asn-tRNA-ligase"/>
</dbReference>
<dbReference type="InterPro" id="IPR002312">
    <property type="entry name" value="Asp/Asn-tRNA-synth_IIb"/>
</dbReference>
<dbReference type="InterPro" id="IPR012340">
    <property type="entry name" value="NA-bd_OB-fold"/>
</dbReference>
<dbReference type="InterPro" id="IPR004365">
    <property type="entry name" value="NA-bd_OB_tRNA"/>
</dbReference>
<dbReference type="NCBIfam" id="TIGR00457">
    <property type="entry name" value="asnS"/>
    <property type="match status" value="1"/>
</dbReference>
<dbReference type="NCBIfam" id="NF003037">
    <property type="entry name" value="PRK03932.1"/>
    <property type="match status" value="1"/>
</dbReference>
<dbReference type="PANTHER" id="PTHR22594:SF34">
    <property type="entry name" value="ASPARAGINE--TRNA LIGASE, MITOCHONDRIAL-RELATED"/>
    <property type="match status" value="1"/>
</dbReference>
<dbReference type="PANTHER" id="PTHR22594">
    <property type="entry name" value="ASPARTYL/LYSYL-TRNA SYNTHETASE"/>
    <property type="match status" value="1"/>
</dbReference>
<dbReference type="Pfam" id="PF00152">
    <property type="entry name" value="tRNA-synt_2"/>
    <property type="match status" value="1"/>
</dbReference>
<dbReference type="Pfam" id="PF01336">
    <property type="entry name" value="tRNA_anti-codon"/>
    <property type="match status" value="1"/>
</dbReference>
<dbReference type="PRINTS" id="PR01042">
    <property type="entry name" value="TRNASYNTHASP"/>
</dbReference>
<dbReference type="SUPFAM" id="SSF55681">
    <property type="entry name" value="Class II aaRS and biotin synthetases"/>
    <property type="match status" value="1"/>
</dbReference>
<dbReference type="SUPFAM" id="SSF50249">
    <property type="entry name" value="Nucleic acid-binding proteins"/>
    <property type="match status" value="1"/>
</dbReference>
<dbReference type="PROSITE" id="PS50862">
    <property type="entry name" value="AA_TRNA_LIGASE_II"/>
    <property type="match status" value="1"/>
</dbReference>
<keyword id="KW-0030">Aminoacyl-tRNA synthetase</keyword>
<keyword id="KW-0067">ATP-binding</keyword>
<keyword id="KW-0963">Cytoplasm</keyword>
<keyword id="KW-0436">Ligase</keyword>
<keyword id="KW-0547">Nucleotide-binding</keyword>
<keyword id="KW-0648">Protein biosynthesis</keyword>
<keyword id="KW-1185">Reference proteome</keyword>
<proteinExistence type="inferred from homology"/>
<comment type="catalytic activity">
    <reaction evidence="1">
        <text>tRNA(Asn) + L-asparagine + ATP = L-asparaginyl-tRNA(Asn) + AMP + diphosphate + H(+)</text>
        <dbReference type="Rhea" id="RHEA:11180"/>
        <dbReference type="Rhea" id="RHEA-COMP:9659"/>
        <dbReference type="Rhea" id="RHEA-COMP:9674"/>
        <dbReference type="ChEBI" id="CHEBI:15378"/>
        <dbReference type="ChEBI" id="CHEBI:30616"/>
        <dbReference type="ChEBI" id="CHEBI:33019"/>
        <dbReference type="ChEBI" id="CHEBI:58048"/>
        <dbReference type="ChEBI" id="CHEBI:78442"/>
        <dbReference type="ChEBI" id="CHEBI:78515"/>
        <dbReference type="ChEBI" id="CHEBI:456215"/>
        <dbReference type="EC" id="6.1.1.22"/>
    </reaction>
</comment>
<comment type="subunit">
    <text evidence="1">Homodimer.</text>
</comment>
<comment type="subcellular location">
    <subcellularLocation>
        <location evidence="1">Cytoplasm</location>
    </subcellularLocation>
</comment>
<comment type="similarity">
    <text evidence="1">Belongs to the class-II aminoacyl-tRNA synthetase family.</text>
</comment>
<name>SYN_DESPS</name>
<feature type="chain" id="PRO_0000176404" description="Asparagine--tRNA ligase">
    <location>
        <begin position="1"/>
        <end position="449"/>
    </location>
</feature>
<gene>
    <name evidence="1" type="primary">asnS</name>
    <name type="ordered locus">DP1331</name>
</gene>